<comment type="function">
    <text evidence="1">Regulatory subunit of the poly(A)-nuclease (PAN) deadenylation complex, one of two cytoplasmic mRNA deadenylases involved in mRNA turnover. PAN specifically shortens poly(A) tails of RNA and the activity is stimulated by poly(A)-binding protein PAB1. PAN deadenylation is followed by rapid degradation of the shortened mRNA tails by the CCR4-NOT complex. Deadenylated mRNAs are then degraded by two alternative mechanisms, namely exosome-mediated 3'-5' exonucleolytic degradation, or deadenylation-dependent mRNA decaping and subsequent 5'-3' exonucleolytic degradation by XRN1. May also be involved in post-transcriptional maturation of mRNA poly(A) tails. PAN3 acts as a positive regulator for PAN activity, recruiting the catalytic subunit PAN2 to mRNA via its interaction with RNA and with PAB1.</text>
</comment>
<comment type="subunit">
    <text evidence="1">Homodimer. Forms a heterotrimer with a catalytic subunit PAN2 to form the poly(A)-nuclease (PAN) deadenylation complex. Interacts (via PAM-2 motif) with poly(A)-binding protein PAB1 (via PABC domain), conferring substrate specificity of the enzyme complex.</text>
</comment>
<comment type="subcellular location">
    <subcellularLocation>
        <location evidence="1">Cytoplasm</location>
    </subcellularLocation>
</comment>
<comment type="domain">
    <text evidence="1">The N-terminal zinc finger binds to poly(A) RNA.</text>
</comment>
<comment type="domain">
    <text evidence="1">Contains a pseudokinase domain. The protein kinase domain is predicted to be catalytically inactive because some of the residues important for catalytic activity are substituted and it lacks the equivalent of the binding site for a peptide substrate. However, it has retained an ATP-binding site and ATP-binding is required for mRNA degradation, stimulating the activity of the PAN2 nuclease in vitro. The nucleotide-binding site is juxtaposed to the RNase active site of PAN2 in the complex and may actually bind nucleosides of a poly(A) RNA rather than ATP, feeding the poly(A)-tail to the active site of the deadenylase and thus increasing the efficiency with which this distributive enzyme degrades oligo(A) RNAs.</text>
</comment>
<comment type="domain">
    <text evidence="1">The pseudokinase domain, the coiled-coil (CC), and C-terminal knob domain (CK) form a structural unit (PKC) that forms an extensive high-affinity interaction surface for PAN2.</text>
</comment>
<comment type="similarity">
    <text evidence="1">Belongs to the protein kinase superfamily. PAN3 family.</text>
</comment>
<evidence type="ECO:0000255" key="1">
    <source>
        <dbReference type="HAMAP-Rule" id="MF_03181"/>
    </source>
</evidence>
<evidence type="ECO:0000256" key="2">
    <source>
        <dbReference type="SAM" id="MobiDB-lite"/>
    </source>
</evidence>
<feature type="chain" id="PRO_0000295366" description="PAN2-PAN3 deadenylation complex subunit PAN3">
    <location>
        <begin position="1"/>
        <end position="684"/>
    </location>
</feature>
<feature type="zinc finger region" description="C3H1-type" evidence="1">
    <location>
        <begin position="36"/>
        <end position="65"/>
    </location>
</feature>
<feature type="region of interest" description="Disordered" evidence="2">
    <location>
        <begin position="1"/>
        <end position="38"/>
    </location>
</feature>
<feature type="region of interest" description="Disordered" evidence="2">
    <location>
        <begin position="68"/>
        <end position="97"/>
    </location>
</feature>
<feature type="region of interest" description="Disordered" evidence="2">
    <location>
        <begin position="112"/>
        <end position="146"/>
    </location>
</feature>
<feature type="region of interest" description="Pseudokinase domain" evidence="1">
    <location>
        <begin position="263"/>
        <end position="544"/>
    </location>
</feature>
<feature type="region of interest" description="Disordered" evidence="2">
    <location>
        <begin position="387"/>
        <end position="412"/>
    </location>
</feature>
<feature type="region of interest" description="Knob domain" evidence="1">
    <location>
        <begin position="584"/>
        <end position="684"/>
    </location>
</feature>
<feature type="coiled-coil region" evidence="1">
    <location>
        <begin position="545"/>
        <end position="583"/>
    </location>
</feature>
<feature type="compositionally biased region" description="Basic and acidic residues" evidence="2">
    <location>
        <begin position="21"/>
        <end position="38"/>
    </location>
</feature>
<feature type="compositionally biased region" description="Pro residues" evidence="2">
    <location>
        <begin position="127"/>
        <end position="139"/>
    </location>
</feature>
<feature type="binding site" evidence="1">
    <location>
        <position position="326"/>
    </location>
    <ligand>
        <name>ATP</name>
        <dbReference type="ChEBI" id="CHEBI:30616"/>
    </ligand>
</feature>
<feature type="binding site" evidence="1">
    <location>
        <begin position="375"/>
        <end position="382"/>
    </location>
    <ligand>
        <name>ATP</name>
        <dbReference type="ChEBI" id="CHEBI:30616"/>
    </ligand>
</feature>
<feature type="binding site" evidence="1">
    <location>
        <begin position="444"/>
        <end position="445"/>
    </location>
    <ligand>
        <name>ATP</name>
        <dbReference type="ChEBI" id="CHEBI:30616"/>
    </ligand>
</feature>
<protein>
    <recommendedName>
        <fullName evidence="1">PAN2-PAN3 deadenylation complex subunit PAN3</fullName>
    </recommendedName>
    <alternativeName>
        <fullName evidence="1">PAB1P-dependent poly(A)-specific ribonuclease</fullName>
    </alternativeName>
    <alternativeName>
        <fullName evidence="1">Poly(A)-nuclease deadenylation complex subunit 3</fullName>
        <shortName evidence="1">PAN deadenylation complex subunit 3</shortName>
    </alternativeName>
</protein>
<gene>
    <name evidence="1" type="primary">PAN3</name>
    <name type="ordered locus">CNJ02470</name>
</gene>
<reference key="1">
    <citation type="journal article" date="2005" name="Science">
        <title>The genome of the basidiomycetous yeast and human pathogen Cryptococcus neoformans.</title>
        <authorList>
            <person name="Loftus B.J."/>
            <person name="Fung E."/>
            <person name="Roncaglia P."/>
            <person name="Rowley D."/>
            <person name="Amedeo P."/>
            <person name="Bruno D."/>
            <person name="Vamathevan J."/>
            <person name="Miranda M."/>
            <person name="Anderson I.J."/>
            <person name="Fraser J.A."/>
            <person name="Allen J.E."/>
            <person name="Bosdet I.E."/>
            <person name="Brent M.R."/>
            <person name="Chiu R."/>
            <person name="Doering T.L."/>
            <person name="Donlin M.J."/>
            <person name="D'Souza C.A."/>
            <person name="Fox D.S."/>
            <person name="Grinberg V."/>
            <person name="Fu J."/>
            <person name="Fukushima M."/>
            <person name="Haas B.J."/>
            <person name="Huang J.C."/>
            <person name="Janbon G."/>
            <person name="Jones S.J.M."/>
            <person name="Koo H.L."/>
            <person name="Krzywinski M.I."/>
            <person name="Kwon-Chung K.J."/>
            <person name="Lengeler K.B."/>
            <person name="Maiti R."/>
            <person name="Marra M.A."/>
            <person name="Marra R.E."/>
            <person name="Mathewson C.A."/>
            <person name="Mitchell T.G."/>
            <person name="Pertea M."/>
            <person name="Riggs F.R."/>
            <person name="Salzberg S.L."/>
            <person name="Schein J.E."/>
            <person name="Shvartsbeyn A."/>
            <person name="Shin H."/>
            <person name="Shumway M."/>
            <person name="Specht C.A."/>
            <person name="Suh B.B."/>
            <person name="Tenney A."/>
            <person name="Utterback T.R."/>
            <person name="Wickes B.L."/>
            <person name="Wortman J.R."/>
            <person name="Wye N.H."/>
            <person name="Kronstad J.W."/>
            <person name="Lodge J.K."/>
            <person name="Heitman J."/>
            <person name="Davis R.W."/>
            <person name="Fraser C.M."/>
            <person name="Hyman R.W."/>
        </authorList>
    </citation>
    <scope>NUCLEOTIDE SEQUENCE [LARGE SCALE GENOMIC DNA]</scope>
    <source>
        <strain>JEC21 / ATCC MYA-565</strain>
    </source>
</reference>
<sequence length="684" mass="75082">MLPPPKSAAVQIVRPPSPSSEKAKEKEKKHSPEKRETAQRICRNVMIYGYCKYQDQGCIYYHPPAGADPSTPQNSSPVAHAPTPSAPTPLAGTPAREKPTLSIEHLAAPVFVPKGLDSSPRASTPSVPTPSAPTPPVWPSLPSTGLLPRQDVQVSAQPSHAQLSATASPMAYDDPSHIALSAAHAHAQAQALTHGILDPHAHAPPVDQSMYLPPRQPLDYNLYAAPLPSIGGNPLYPTHPHAFFVSDDLRRAIQAKQEAVYAGANGASAPGLPQELGVYHSLIPLPLPAPTAQCPPTQSQPSKVYGLPSPVYRATSEVDGNTYCLRRVEGFKLVNQLAFASMDTWRRMRHPNIVGLKEAFTTKTFGDNSLIMVYDYHPLSTTLYDEYLSPNPPEPSPASALANQPPKRRSSPPERILWSYVTQIANALKAIHSSGLAVRNLDASKILLTGKNRIRLNGCGVWDVLAFDNKTPVQAFQQEDLLSFGKLIISLTCDFFQPTLPFSLPLEHISRHYSSDLSNLILYLISKPAQGQIKSIDEVVKMMGPRILNELDAVQSYADVLENELGAEVENGRIVRLLTKLGFINERAEFELDPRWSDTGDRYILKLFRDYVFHSVGVDGKPILDLSHVLVCLNKLDAGLDERVMLVSRDDQSCLVVSYREIKHCIEAAFNELKNAGNNHRVHR</sequence>
<proteinExistence type="inferred from homology"/>
<dbReference type="EMBL" id="AE017350">
    <property type="protein sequence ID" value="AAW46022.1"/>
    <property type="molecule type" value="Genomic_DNA"/>
</dbReference>
<dbReference type="RefSeq" id="XP_567539.1">
    <property type="nucleotide sequence ID" value="XM_567539.1"/>
</dbReference>
<dbReference type="SMR" id="P0CP50"/>
<dbReference type="FunCoup" id="P0CP50">
    <property type="interactions" value="117"/>
</dbReference>
<dbReference type="STRING" id="214684.P0CP50"/>
<dbReference type="PaxDb" id="214684-P0CP50"/>
<dbReference type="EnsemblFungi" id="AAW46022">
    <property type="protein sequence ID" value="AAW46022"/>
    <property type="gene ID" value="CNJ02470"/>
</dbReference>
<dbReference type="GeneID" id="3254153"/>
<dbReference type="KEGG" id="cne:CNJ02470"/>
<dbReference type="VEuPathDB" id="FungiDB:CNJ02470"/>
<dbReference type="eggNOG" id="KOG3741">
    <property type="taxonomic scope" value="Eukaryota"/>
</dbReference>
<dbReference type="HOGENOM" id="CLU_016423_2_0_1"/>
<dbReference type="InParanoid" id="P0CP50"/>
<dbReference type="OMA" id="YVFHSVD"/>
<dbReference type="OrthoDB" id="204958at2759"/>
<dbReference type="Proteomes" id="UP000002149">
    <property type="component" value="Chromosome 10"/>
</dbReference>
<dbReference type="GO" id="GO:0000932">
    <property type="term" value="C:P-body"/>
    <property type="evidence" value="ECO:0000318"/>
    <property type="project" value="GO_Central"/>
</dbReference>
<dbReference type="GO" id="GO:0031251">
    <property type="term" value="C:PAN complex"/>
    <property type="evidence" value="ECO:0000318"/>
    <property type="project" value="GO_Central"/>
</dbReference>
<dbReference type="GO" id="GO:0005524">
    <property type="term" value="F:ATP binding"/>
    <property type="evidence" value="ECO:0007669"/>
    <property type="project" value="UniProtKB-UniRule"/>
</dbReference>
<dbReference type="GO" id="GO:0008143">
    <property type="term" value="F:poly(A) binding"/>
    <property type="evidence" value="ECO:0000318"/>
    <property type="project" value="GO_Central"/>
</dbReference>
<dbReference type="GO" id="GO:0004672">
    <property type="term" value="F:protein kinase activity"/>
    <property type="evidence" value="ECO:0007669"/>
    <property type="project" value="InterPro"/>
</dbReference>
<dbReference type="GO" id="GO:0008270">
    <property type="term" value="F:zinc ion binding"/>
    <property type="evidence" value="ECO:0007669"/>
    <property type="project" value="UniProtKB-KW"/>
</dbReference>
<dbReference type="GO" id="GO:0006397">
    <property type="term" value="P:mRNA processing"/>
    <property type="evidence" value="ECO:0007669"/>
    <property type="project" value="UniProtKB-KW"/>
</dbReference>
<dbReference type="GO" id="GO:0000289">
    <property type="term" value="P:nuclear-transcribed mRNA poly(A) tail shortening"/>
    <property type="evidence" value="ECO:0000318"/>
    <property type="project" value="GO_Central"/>
</dbReference>
<dbReference type="FunFam" id="1.10.287.3700:FF:000001">
    <property type="entry name" value="PAN2-PAN3 deadenylation complex subunit PAN3"/>
    <property type="match status" value="1"/>
</dbReference>
<dbReference type="FunFam" id="1.10.510.10:FF:000750">
    <property type="entry name" value="PAN2-PAN3 deadenylation complex subunit PAN3"/>
    <property type="match status" value="1"/>
</dbReference>
<dbReference type="FunFam" id="1.20.5.5160:FF:000002">
    <property type="entry name" value="PAN2-PAN3 deadenylation complex subunit PAN3"/>
    <property type="match status" value="1"/>
</dbReference>
<dbReference type="Gene3D" id="1.10.287.3700">
    <property type="match status" value="1"/>
</dbReference>
<dbReference type="Gene3D" id="1.20.5.5160">
    <property type="match status" value="1"/>
</dbReference>
<dbReference type="Gene3D" id="6.10.250.3160">
    <property type="match status" value="1"/>
</dbReference>
<dbReference type="Gene3D" id="1.10.510.10">
    <property type="entry name" value="Transferase(Phosphotransferase) domain 1"/>
    <property type="match status" value="1"/>
</dbReference>
<dbReference type="HAMAP" id="MF_03181">
    <property type="entry name" value="PAN3"/>
    <property type="match status" value="1"/>
</dbReference>
<dbReference type="InterPro" id="IPR011009">
    <property type="entry name" value="Kinase-like_dom_sf"/>
</dbReference>
<dbReference type="InterPro" id="IPR030844">
    <property type="entry name" value="PAN3"/>
</dbReference>
<dbReference type="InterPro" id="IPR041332">
    <property type="entry name" value="Pan3_PK"/>
</dbReference>
<dbReference type="InterPro" id="IPR000719">
    <property type="entry name" value="Prot_kinase_dom"/>
</dbReference>
<dbReference type="InterPro" id="IPR000571">
    <property type="entry name" value="Znf_CCCH"/>
</dbReference>
<dbReference type="PANTHER" id="PTHR12272">
    <property type="entry name" value="DEADENYLATION COMPLEX SUBUNIT PAN3"/>
    <property type="match status" value="1"/>
</dbReference>
<dbReference type="PANTHER" id="PTHR12272:SF11">
    <property type="entry name" value="PAN2-PAN3 DEADENYLATION COMPLEX SUBUNIT PAN3"/>
    <property type="match status" value="1"/>
</dbReference>
<dbReference type="Pfam" id="PF18101">
    <property type="entry name" value="Pan3_PK"/>
    <property type="match status" value="1"/>
</dbReference>
<dbReference type="SUPFAM" id="SSF56112">
    <property type="entry name" value="Protein kinase-like (PK-like)"/>
    <property type="match status" value="1"/>
</dbReference>
<dbReference type="PROSITE" id="PS50011">
    <property type="entry name" value="PROTEIN_KINASE_DOM"/>
    <property type="match status" value="1"/>
</dbReference>
<dbReference type="PROSITE" id="PS50103">
    <property type="entry name" value="ZF_C3H1"/>
    <property type="match status" value="1"/>
</dbReference>
<keyword id="KW-0067">ATP-binding</keyword>
<keyword id="KW-0175">Coiled coil</keyword>
<keyword id="KW-0963">Cytoplasm</keyword>
<keyword id="KW-0479">Metal-binding</keyword>
<keyword id="KW-0507">mRNA processing</keyword>
<keyword id="KW-0547">Nucleotide-binding</keyword>
<keyword id="KW-1185">Reference proteome</keyword>
<keyword id="KW-0862">Zinc</keyword>
<keyword id="KW-0863">Zinc-finger</keyword>
<accession>P0CP50</accession>
<accession>Q55L85</accession>
<accession>Q5KA98</accession>
<name>PAN3_CRYNJ</name>
<organism>
    <name type="scientific">Cryptococcus neoformans var. neoformans serotype D (strain JEC21 / ATCC MYA-565)</name>
    <name type="common">Filobasidiella neoformans</name>
    <dbReference type="NCBI Taxonomy" id="214684"/>
    <lineage>
        <taxon>Eukaryota</taxon>
        <taxon>Fungi</taxon>
        <taxon>Dikarya</taxon>
        <taxon>Basidiomycota</taxon>
        <taxon>Agaricomycotina</taxon>
        <taxon>Tremellomycetes</taxon>
        <taxon>Tremellales</taxon>
        <taxon>Cryptococcaceae</taxon>
        <taxon>Cryptococcus</taxon>
        <taxon>Cryptococcus neoformans species complex</taxon>
    </lineage>
</organism>